<evidence type="ECO:0000255" key="1">
    <source>
        <dbReference type="HAMAP-Rule" id="MF_01331"/>
    </source>
</evidence>
<evidence type="ECO:0000256" key="2">
    <source>
        <dbReference type="SAM" id="MobiDB-lite"/>
    </source>
</evidence>
<evidence type="ECO:0000305" key="3"/>
<feature type="chain" id="PRO_1000142234" description="Large ribosomal subunit protein uL22">
    <location>
        <begin position="1"/>
        <end position="120"/>
    </location>
</feature>
<feature type="region of interest" description="Disordered" evidence="2">
    <location>
        <begin position="1"/>
        <end position="22"/>
    </location>
</feature>
<comment type="function">
    <text evidence="1">This protein binds specifically to 23S rRNA; its binding is stimulated by other ribosomal proteins, e.g. L4, L17, and L20. It is important during the early stages of 50S assembly. It makes multiple contacts with different domains of the 23S rRNA in the assembled 50S subunit and ribosome (By similarity).</text>
</comment>
<comment type="function">
    <text evidence="1">The globular domain of the protein is located near the polypeptide exit tunnel on the outside of the subunit, while an extended beta-hairpin is found that lines the wall of the exit tunnel in the center of the 70S ribosome.</text>
</comment>
<comment type="subunit">
    <text evidence="1">Part of the 50S ribosomal subunit.</text>
</comment>
<comment type="similarity">
    <text evidence="1">Belongs to the universal ribosomal protein uL22 family.</text>
</comment>
<gene>
    <name evidence="1" type="primary">rplV</name>
    <name type="ordered locus">BbuZS7_0494</name>
</gene>
<proteinExistence type="inferred from homology"/>
<organism>
    <name type="scientific">Borreliella burgdorferi (strain ZS7)</name>
    <name type="common">Borrelia burgdorferi</name>
    <dbReference type="NCBI Taxonomy" id="445985"/>
    <lineage>
        <taxon>Bacteria</taxon>
        <taxon>Pseudomonadati</taxon>
        <taxon>Spirochaetota</taxon>
        <taxon>Spirochaetia</taxon>
        <taxon>Spirochaetales</taxon>
        <taxon>Borreliaceae</taxon>
        <taxon>Borreliella</taxon>
    </lineage>
</organism>
<sequence>MLVNRRYTAKGKNLPSSPKKVRPIADNIRGESYIKAIAVLCSMPNKGAKLLEKVVKSAASNAMYHNKNLSEDMIFVKTVMVDDGRRRKKIWPRARGRADRLVNRNCHIFVEVDEKKDIKG</sequence>
<accession>B7J248</accession>
<keyword id="KW-0687">Ribonucleoprotein</keyword>
<keyword id="KW-0689">Ribosomal protein</keyword>
<keyword id="KW-0694">RNA-binding</keyword>
<keyword id="KW-0699">rRNA-binding</keyword>
<name>RL22_BORBZ</name>
<reference key="1">
    <citation type="journal article" date="2011" name="J. Bacteriol.">
        <title>Whole-genome sequences of thirteen isolates of Borrelia burgdorferi.</title>
        <authorList>
            <person name="Schutzer S.E."/>
            <person name="Fraser-Liggett C.M."/>
            <person name="Casjens S.R."/>
            <person name="Qiu W.G."/>
            <person name="Dunn J.J."/>
            <person name="Mongodin E.F."/>
            <person name="Luft B.J."/>
        </authorList>
    </citation>
    <scope>NUCLEOTIDE SEQUENCE [LARGE SCALE GENOMIC DNA]</scope>
    <source>
        <strain>ZS7</strain>
    </source>
</reference>
<dbReference type="EMBL" id="CP001205">
    <property type="protein sequence ID" value="ACK74436.1"/>
    <property type="molecule type" value="Genomic_DNA"/>
</dbReference>
<dbReference type="RefSeq" id="WP_002656402.1">
    <property type="nucleotide sequence ID" value="NC_011728.1"/>
</dbReference>
<dbReference type="SMR" id="B7J248"/>
<dbReference type="GeneID" id="56567918"/>
<dbReference type="KEGG" id="bbz:BbuZS7_0494"/>
<dbReference type="HOGENOM" id="CLU_083987_3_1_12"/>
<dbReference type="Proteomes" id="UP000006901">
    <property type="component" value="Chromosome"/>
</dbReference>
<dbReference type="GO" id="GO:0022625">
    <property type="term" value="C:cytosolic large ribosomal subunit"/>
    <property type="evidence" value="ECO:0007669"/>
    <property type="project" value="TreeGrafter"/>
</dbReference>
<dbReference type="GO" id="GO:0019843">
    <property type="term" value="F:rRNA binding"/>
    <property type="evidence" value="ECO:0007669"/>
    <property type="project" value="UniProtKB-UniRule"/>
</dbReference>
<dbReference type="GO" id="GO:0003735">
    <property type="term" value="F:structural constituent of ribosome"/>
    <property type="evidence" value="ECO:0007669"/>
    <property type="project" value="InterPro"/>
</dbReference>
<dbReference type="GO" id="GO:0006412">
    <property type="term" value="P:translation"/>
    <property type="evidence" value="ECO:0007669"/>
    <property type="project" value="UniProtKB-UniRule"/>
</dbReference>
<dbReference type="CDD" id="cd00336">
    <property type="entry name" value="Ribosomal_L22"/>
    <property type="match status" value="1"/>
</dbReference>
<dbReference type="Gene3D" id="3.90.470.10">
    <property type="entry name" value="Ribosomal protein L22/L17"/>
    <property type="match status" value="1"/>
</dbReference>
<dbReference type="HAMAP" id="MF_01331_B">
    <property type="entry name" value="Ribosomal_uL22_B"/>
    <property type="match status" value="1"/>
</dbReference>
<dbReference type="InterPro" id="IPR001063">
    <property type="entry name" value="Ribosomal_uL22"/>
</dbReference>
<dbReference type="InterPro" id="IPR005727">
    <property type="entry name" value="Ribosomal_uL22_bac/chlpt-type"/>
</dbReference>
<dbReference type="InterPro" id="IPR047867">
    <property type="entry name" value="Ribosomal_uL22_bac/org-type"/>
</dbReference>
<dbReference type="InterPro" id="IPR018260">
    <property type="entry name" value="Ribosomal_uL22_CS"/>
</dbReference>
<dbReference type="InterPro" id="IPR036394">
    <property type="entry name" value="Ribosomal_uL22_sf"/>
</dbReference>
<dbReference type="NCBIfam" id="TIGR01044">
    <property type="entry name" value="rplV_bact"/>
    <property type="match status" value="1"/>
</dbReference>
<dbReference type="PANTHER" id="PTHR13501">
    <property type="entry name" value="CHLOROPLAST 50S RIBOSOMAL PROTEIN L22-RELATED"/>
    <property type="match status" value="1"/>
</dbReference>
<dbReference type="PANTHER" id="PTHR13501:SF8">
    <property type="entry name" value="LARGE RIBOSOMAL SUBUNIT PROTEIN UL22M"/>
    <property type="match status" value="1"/>
</dbReference>
<dbReference type="Pfam" id="PF00237">
    <property type="entry name" value="Ribosomal_L22"/>
    <property type="match status" value="1"/>
</dbReference>
<dbReference type="SUPFAM" id="SSF54843">
    <property type="entry name" value="Ribosomal protein L22"/>
    <property type="match status" value="1"/>
</dbReference>
<dbReference type="PROSITE" id="PS00464">
    <property type="entry name" value="RIBOSOMAL_L22"/>
    <property type="match status" value="1"/>
</dbReference>
<protein>
    <recommendedName>
        <fullName evidence="1">Large ribosomal subunit protein uL22</fullName>
    </recommendedName>
    <alternativeName>
        <fullName evidence="3">50S ribosomal protein L22</fullName>
    </alternativeName>
</protein>